<keyword id="KW-0131">Cell cycle</keyword>
<keyword id="KW-0132">Cell division</keyword>
<keyword id="KW-0238">DNA-binding</keyword>
<protein>
    <recommendedName>
        <fullName evidence="1">Probable cell division protein WhiA</fullName>
    </recommendedName>
</protein>
<comment type="function">
    <text evidence="1">Involved in cell division and chromosome segregation.</text>
</comment>
<comment type="similarity">
    <text evidence="1">Belongs to the WhiA family.</text>
</comment>
<evidence type="ECO:0000255" key="1">
    <source>
        <dbReference type="HAMAP-Rule" id="MF_01420"/>
    </source>
</evidence>
<sequence>MGSLSFASETKKELTGIEVKPCCLKAELSALIRMNGSISFSNRRLLLNIQTENAAIARRIYTLLKKGYDVVVELLVRKKMRLKKNNVYIVRVVEGTHELLSDLKIMEEGFSFVHAISPELVQKKCCKRSYLRGAFLAGGSVNNPETSSYHLEIFSLYREHNESLCELMNTSFHLHARTLERKKGFITYLKEAEKIAEFLSVIGAHQALLRFEDVRIVRDMRNSVNRLVNCETANLNKTIGAALRQVENIRYIDETIGLDQLPEKLREIAKLRIAYQDVTLKELGEMVSGGKISKSGINHRLRKLDEIAERLRAGQPIDFHKSL</sequence>
<dbReference type="EMBL" id="CP000922">
    <property type="protein sequence ID" value="ACJ34879.1"/>
    <property type="molecule type" value="Genomic_DNA"/>
</dbReference>
<dbReference type="SMR" id="B7GL36"/>
<dbReference type="STRING" id="491915.Aflv_2524"/>
<dbReference type="KEGG" id="afl:Aflv_2524"/>
<dbReference type="eggNOG" id="COG1481">
    <property type="taxonomic scope" value="Bacteria"/>
</dbReference>
<dbReference type="HOGENOM" id="CLU_053282_0_0_9"/>
<dbReference type="Proteomes" id="UP000000742">
    <property type="component" value="Chromosome"/>
</dbReference>
<dbReference type="GO" id="GO:0003677">
    <property type="term" value="F:DNA binding"/>
    <property type="evidence" value="ECO:0007669"/>
    <property type="project" value="UniProtKB-UniRule"/>
</dbReference>
<dbReference type="GO" id="GO:0051301">
    <property type="term" value="P:cell division"/>
    <property type="evidence" value="ECO:0007669"/>
    <property type="project" value="UniProtKB-UniRule"/>
</dbReference>
<dbReference type="GO" id="GO:0043937">
    <property type="term" value="P:regulation of sporulation"/>
    <property type="evidence" value="ECO:0007669"/>
    <property type="project" value="InterPro"/>
</dbReference>
<dbReference type="FunFam" id="3.10.28.10:FF:000002">
    <property type="entry name" value="Probable cell division protein WhiA"/>
    <property type="match status" value="1"/>
</dbReference>
<dbReference type="Gene3D" id="3.10.28.10">
    <property type="entry name" value="Homing endonucleases"/>
    <property type="match status" value="1"/>
</dbReference>
<dbReference type="HAMAP" id="MF_01420">
    <property type="entry name" value="HTH_type_WhiA"/>
    <property type="match status" value="1"/>
</dbReference>
<dbReference type="InterPro" id="IPR027434">
    <property type="entry name" value="Homing_endonucl"/>
</dbReference>
<dbReference type="InterPro" id="IPR018478">
    <property type="entry name" value="Sporu_reg_WhiA_N_dom"/>
</dbReference>
<dbReference type="InterPro" id="IPR003802">
    <property type="entry name" value="Sporulation_regulator_WhiA"/>
</dbReference>
<dbReference type="InterPro" id="IPR023054">
    <property type="entry name" value="Sporulation_regulator_WhiA_C"/>
</dbReference>
<dbReference type="InterPro" id="IPR039518">
    <property type="entry name" value="WhiA_LAGLIDADG_dom"/>
</dbReference>
<dbReference type="NCBIfam" id="TIGR00647">
    <property type="entry name" value="DNA_bind_WhiA"/>
    <property type="match status" value="1"/>
</dbReference>
<dbReference type="PANTHER" id="PTHR37307">
    <property type="entry name" value="CELL DIVISION PROTEIN WHIA-RELATED"/>
    <property type="match status" value="1"/>
</dbReference>
<dbReference type="PANTHER" id="PTHR37307:SF1">
    <property type="entry name" value="CELL DIVISION PROTEIN WHIA-RELATED"/>
    <property type="match status" value="1"/>
</dbReference>
<dbReference type="Pfam" id="PF02650">
    <property type="entry name" value="HTH_WhiA"/>
    <property type="match status" value="1"/>
</dbReference>
<dbReference type="Pfam" id="PF14527">
    <property type="entry name" value="LAGLIDADG_WhiA"/>
    <property type="match status" value="1"/>
</dbReference>
<dbReference type="Pfam" id="PF10298">
    <property type="entry name" value="WhiA_N"/>
    <property type="match status" value="1"/>
</dbReference>
<dbReference type="SUPFAM" id="SSF55608">
    <property type="entry name" value="Homing endonucleases"/>
    <property type="match status" value="1"/>
</dbReference>
<proteinExistence type="inferred from homology"/>
<reference key="1">
    <citation type="journal article" date="2008" name="Genome Biol.">
        <title>Encapsulated in silica: genome, proteome and physiology of the thermophilic bacterium Anoxybacillus flavithermus WK1.</title>
        <authorList>
            <person name="Saw J.H."/>
            <person name="Mountain B.W."/>
            <person name="Feng L."/>
            <person name="Omelchenko M.V."/>
            <person name="Hou S."/>
            <person name="Saito J.A."/>
            <person name="Stott M.B."/>
            <person name="Li D."/>
            <person name="Zhao G."/>
            <person name="Wu J."/>
            <person name="Galperin M.Y."/>
            <person name="Koonin E.V."/>
            <person name="Makarova K.S."/>
            <person name="Wolf Y.I."/>
            <person name="Rigden D.J."/>
            <person name="Dunfield P.F."/>
            <person name="Wang L."/>
            <person name="Alam M."/>
        </authorList>
    </citation>
    <scope>NUCLEOTIDE SEQUENCE [LARGE SCALE GENOMIC DNA]</scope>
    <source>
        <strain>DSM 21510 / WK1</strain>
    </source>
</reference>
<accession>B7GL36</accession>
<feature type="chain" id="PRO_0000376423" description="Probable cell division protein WhiA">
    <location>
        <begin position="1"/>
        <end position="323"/>
    </location>
</feature>
<feature type="DNA-binding region" description="H-T-H motif" evidence="1">
    <location>
        <begin position="279"/>
        <end position="313"/>
    </location>
</feature>
<organism>
    <name type="scientific">Anoxybacillus flavithermus (strain DSM 21510 / WK1)</name>
    <dbReference type="NCBI Taxonomy" id="491915"/>
    <lineage>
        <taxon>Bacteria</taxon>
        <taxon>Bacillati</taxon>
        <taxon>Bacillota</taxon>
        <taxon>Bacilli</taxon>
        <taxon>Bacillales</taxon>
        <taxon>Anoxybacillaceae</taxon>
        <taxon>Anoxybacillus</taxon>
    </lineage>
</organism>
<name>WHIA_ANOFW</name>
<gene>
    <name evidence="1" type="primary">whiA</name>
    <name type="ordered locus">Aflv_2524</name>
</gene>